<gene>
    <name type="primary">FDS-5</name>
</gene>
<comment type="function">
    <text evidence="4">Condenses two molecules of dimethylallyl diphosphate (DMAPP) to produce mainly an irregular monoterpene, chrysanthemyl diphosphate (CPP) and lower amounts of a branched monoterpene, lavandulyl diphosphate (LPP). CPP is a precursor of the pyrethrin insecticides. When incubated with isopentenyl diphosphate (IPP) and DMAPP, catalyzes three competing isoprenoid condensation reactions, a chain elongation to give geranyl diphosphate (GPP), a cyclopropanation to give CPP and a branching to give LPP.</text>
</comment>
<comment type="catalytic activity">
    <reaction>
        <text>isopentenyl diphosphate + dimethylallyl diphosphate = (2E)-geranyl diphosphate + diphosphate</text>
        <dbReference type="Rhea" id="RHEA:22408"/>
        <dbReference type="ChEBI" id="CHEBI:33019"/>
        <dbReference type="ChEBI" id="CHEBI:57623"/>
        <dbReference type="ChEBI" id="CHEBI:58057"/>
        <dbReference type="ChEBI" id="CHEBI:128769"/>
        <dbReference type="EC" id="2.5.1.1"/>
    </reaction>
</comment>
<comment type="catalytic activity">
    <reaction>
        <text>2 dimethylallyl diphosphate = (R,R)-chrysanthemyl diphosphate + diphosphate</text>
        <dbReference type="Rhea" id="RHEA:14009"/>
        <dbReference type="ChEBI" id="CHEBI:33019"/>
        <dbReference type="ChEBI" id="CHEBI:57623"/>
        <dbReference type="ChEBI" id="CHEBI:58819"/>
        <dbReference type="EC" id="2.5.1.67"/>
    </reaction>
</comment>
<comment type="catalytic activity">
    <reaction>
        <text>2 dimethylallyl diphosphate = (R)-lavandulyl diphosphate + diphosphate</text>
        <dbReference type="Rhea" id="RHEA:21676"/>
        <dbReference type="ChEBI" id="CHEBI:33019"/>
        <dbReference type="ChEBI" id="CHEBI:57623"/>
        <dbReference type="ChEBI" id="CHEBI:143949"/>
        <dbReference type="EC" id="2.5.1.69"/>
    </reaction>
</comment>
<comment type="cofactor">
    <cofactor evidence="1">
        <name>Mg(2+)</name>
        <dbReference type="ChEBI" id="CHEBI:18420"/>
    </cofactor>
    <cofactor evidence="1">
        <name>Mn(2+)</name>
        <dbReference type="ChEBI" id="CHEBI:29035"/>
    </cofactor>
    <text evidence="1">Binds Mg(2+) or Mn(2+).</text>
</comment>
<comment type="biophysicochemical properties">
    <kinetics>
        <KM evidence="4">1430 uM for dimethylallyl diphosphate</KM>
        <KM evidence="4">1334 uM for isopentenyl diphosphate</KM>
    </kinetics>
</comment>
<comment type="subcellular location">
    <subcellularLocation>
        <location evidence="4">Plastid</location>
        <location evidence="4">Chloroplast</location>
    </subcellularLocation>
</comment>
<comment type="domain">
    <text evidence="1">The Asp-Asp-Xaa-Xaa-Asp/Glu (DDXXD/E) motif is important for the catalytic activity, presumably through binding to Mg(2+).</text>
</comment>
<comment type="similarity">
    <text evidence="5">Belongs to the FPP/GGPP synthase family.</text>
</comment>
<accession>Q7XYS8</accession>
<protein>
    <recommendedName>
        <fullName>Monoterpene synthase FDS-5, chloroplastic</fullName>
    </recommendedName>
    <alternativeName>
        <fullName>Chrysanthemyl diphosphate synthase</fullName>
        <shortName>CPP synthase</shortName>
        <ecNumber>2.5.1.67</ecNumber>
    </alternativeName>
    <alternativeName>
        <fullName>Dimethylallyltranstransferase</fullName>
        <ecNumber>2.5.1.1</ecNumber>
    </alternativeName>
    <alternativeName>
        <fullName>Lavandulyl diphosphate synthase</fullName>
        <shortName>LPP synthase</shortName>
        <ecNumber>2.5.1.69</ecNumber>
    </alternativeName>
</protein>
<proteinExistence type="evidence at protein level"/>
<sequence length="394" mass="45022">MASFISLSSKSASWNASSCPHPSVQPFVTRKNVVRYHKPTSSEPSYSPLTTTLSSNLNSQFMQVYETLKSELIHDPLFEFDDDSRQWVERMIDYTVPGGKMVRGYSVVDSYQLLKGEELTEEEAFLACALGWCTEWFQAFILLHDDMMDGSHTRRGQPCWFRLPEVGAVAINDGVLLRNHVHRILKKHFQGKAYYVHLVDLFNETEFQTISGQMIDTISRLAGQKELSKYSMSLNRRIVQYKGAYYSCYLPIACALLMFGENLDDYVQVKDILVELGMYYQIQNDYLDTFGDPNVFGKTGTDIEECKCSWLIAKALELANEEQKKILSENYGIKDPAKVAKVKEIYHALNLKGAYEDYETNLYENSMKAIKAHPSIAVQAVLKSCLEKMYKGHK</sequence>
<name>CHRDS_ARTSI</name>
<keyword id="KW-0002">3D-structure</keyword>
<keyword id="KW-0150">Chloroplast</keyword>
<keyword id="KW-0414">Isoprene biosynthesis</keyword>
<keyword id="KW-0460">Magnesium</keyword>
<keyword id="KW-0479">Metal-binding</keyword>
<keyword id="KW-0934">Plastid</keyword>
<keyword id="KW-0808">Transferase</keyword>
<keyword id="KW-0809">Transit peptide</keyword>
<feature type="transit peptide" description="Chloroplast" evidence="3">
    <location>
        <begin position="1"/>
        <end position="65"/>
    </location>
</feature>
<feature type="chain" id="PRO_0000405122" description="Monoterpene synthase FDS-5, chloroplastic">
    <location>
        <begin position="66"/>
        <end position="394"/>
    </location>
</feature>
<feature type="short sequence motif" description="DDXXD motif">
    <location>
        <begin position="145"/>
        <end position="149"/>
    </location>
</feature>
<feature type="binding site" evidence="2">
    <location>
        <position position="100"/>
    </location>
    <ligand>
        <name>isopentenyl diphosphate</name>
        <dbReference type="ChEBI" id="CHEBI:128769"/>
    </ligand>
</feature>
<feature type="binding site" evidence="2">
    <location>
        <position position="103"/>
    </location>
    <ligand>
        <name>isopentenyl diphosphate</name>
        <dbReference type="ChEBI" id="CHEBI:128769"/>
    </ligand>
</feature>
<feature type="binding site" evidence="2">
    <location>
        <position position="138"/>
    </location>
    <ligand>
        <name>isopentenyl diphosphate</name>
        <dbReference type="ChEBI" id="CHEBI:128769"/>
    </ligand>
</feature>
<feature type="binding site" evidence="2">
    <location>
        <position position="145"/>
    </location>
    <ligand>
        <name>Mg(2+)</name>
        <dbReference type="ChEBI" id="CHEBI:18420"/>
        <label>1</label>
    </ligand>
</feature>
<feature type="binding site" evidence="2">
    <location>
        <position position="145"/>
    </location>
    <ligand>
        <name>Mg(2+)</name>
        <dbReference type="ChEBI" id="CHEBI:18420"/>
        <label>2</label>
    </ligand>
</feature>
<feature type="binding site" evidence="2">
    <location>
        <position position="149"/>
    </location>
    <ligand>
        <name>Mg(2+)</name>
        <dbReference type="ChEBI" id="CHEBI:18420"/>
        <label>1</label>
    </ligand>
</feature>
<feature type="binding site" evidence="2">
    <location>
        <position position="149"/>
    </location>
    <ligand>
        <name>Mg(2+)</name>
        <dbReference type="ChEBI" id="CHEBI:18420"/>
        <label>2</label>
    </ligand>
</feature>
<feature type="binding site" evidence="1">
    <location>
        <position position="154"/>
    </location>
    <ligand>
        <name>dimethylallyl diphosphate</name>
        <dbReference type="ChEBI" id="CHEBI:57623"/>
    </ligand>
</feature>
<feature type="binding site" evidence="2">
    <location>
        <position position="155"/>
    </location>
    <ligand>
        <name>isopentenyl diphosphate</name>
        <dbReference type="ChEBI" id="CHEBI:128769"/>
    </ligand>
</feature>
<feature type="binding site" evidence="1">
    <location>
        <position position="242"/>
    </location>
    <ligand>
        <name>dimethylallyl diphosphate</name>
        <dbReference type="ChEBI" id="CHEBI:57623"/>
    </ligand>
</feature>
<feature type="binding site" evidence="1">
    <location>
        <position position="281"/>
    </location>
    <ligand>
        <name>dimethylallyl diphosphate</name>
        <dbReference type="ChEBI" id="CHEBI:57623"/>
    </ligand>
</feature>
<feature type="binding site" evidence="1">
    <location>
        <position position="298"/>
    </location>
    <ligand>
        <name>dimethylallyl diphosphate</name>
        <dbReference type="ChEBI" id="CHEBI:57623"/>
    </ligand>
</feature>
<feature type="binding site" evidence="1">
    <location>
        <position position="307"/>
    </location>
    <ligand>
        <name>dimethylallyl diphosphate</name>
        <dbReference type="ChEBI" id="CHEBI:57623"/>
    </ligand>
</feature>
<feature type="helix" evidence="6">
    <location>
        <begin position="58"/>
        <end position="72"/>
    </location>
</feature>
<feature type="helix" evidence="6">
    <location>
        <begin position="82"/>
        <end position="95"/>
    </location>
</feature>
<feature type="strand" evidence="6">
    <location>
        <begin position="96"/>
        <end position="99"/>
    </location>
</feature>
<feature type="helix" evidence="6">
    <location>
        <begin position="102"/>
        <end position="115"/>
    </location>
</feature>
<reference key="1">
    <citation type="journal article" date="2003" name="J. Biol. Chem.">
        <title>Enzymes encoded by the farnesyl diphosphate synthase gene family in the Big Sagebrush Artemisia tridentata ssp. spiciformis.</title>
        <authorList>
            <person name="Hemmerlin A."/>
            <person name="Rivera S.B."/>
            <person name="Erickson H.K."/>
            <person name="Poulter C.D."/>
        </authorList>
    </citation>
    <scope>NUCLEOTIDE SEQUENCE [MRNA]</scope>
    <scope>CATALYTIC ACTIVITY</scope>
    <scope>BIOPHYSICOCHEMICAL PROPERTIES</scope>
    <scope>SUBCELLULAR LOCATION</scope>
    <scope>FUNCTION</scope>
</reference>
<reference key="2">
    <citation type="journal article" date="2003" name="J. Am. Chem. Soc.">
        <title>Chrysanthemyl diphosphate synthase. The relationship among chain elongation, branching, and cyclopropanation reactions in the isoprenoid biosynthetic pathway.</title>
        <authorList>
            <person name="Erickson H.K."/>
            <person name="Poulter C.D."/>
        </authorList>
    </citation>
    <scope>CATALYTIC ACTIVITY</scope>
</reference>
<dbReference type="EC" id="2.5.1.67"/>
<dbReference type="EC" id="2.5.1.1"/>
<dbReference type="EC" id="2.5.1.69"/>
<dbReference type="EMBL" id="AY308478">
    <property type="protein sequence ID" value="AAP74721.1"/>
    <property type="molecule type" value="mRNA"/>
</dbReference>
<dbReference type="PDB" id="4KK2">
    <property type="method" value="X-ray"/>
    <property type="resolution" value="2.20 A"/>
    <property type="chains" value="A/B=50-120"/>
</dbReference>
<dbReference type="PDBsum" id="4KK2"/>
<dbReference type="SMR" id="Q7XYS8"/>
<dbReference type="KEGG" id="ag:AAP74721"/>
<dbReference type="BRENDA" id="2.5.1.1">
    <property type="organism ID" value="8609"/>
</dbReference>
<dbReference type="BRENDA" id="2.5.1.67">
    <property type="organism ID" value="8609"/>
</dbReference>
<dbReference type="BRENDA" id="2.5.1.69">
    <property type="organism ID" value="8609"/>
</dbReference>
<dbReference type="SABIO-RK" id="Q7XYS8"/>
<dbReference type="GO" id="GO:0009507">
    <property type="term" value="C:chloroplast"/>
    <property type="evidence" value="ECO:0007669"/>
    <property type="project" value="UniProtKB-SubCell"/>
</dbReference>
<dbReference type="GO" id="GO:0004337">
    <property type="term" value="F:(2E,6E)-farnesyl diphosphate synthase activity"/>
    <property type="evidence" value="ECO:0007669"/>
    <property type="project" value="TreeGrafter"/>
</dbReference>
<dbReference type="GO" id="GO:0033849">
    <property type="term" value="F:chrysanthemyl diphosphate synthase activity"/>
    <property type="evidence" value="ECO:0007669"/>
    <property type="project" value="UniProtKB-EC"/>
</dbReference>
<dbReference type="GO" id="GO:0004161">
    <property type="term" value="F:dimethylallyltranstransferase activity"/>
    <property type="evidence" value="ECO:0007669"/>
    <property type="project" value="UniProtKB-EC"/>
</dbReference>
<dbReference type="GO" id="GO:0033851">
    <property type="term" value="F:lavandulyl diphosphate synthase activity"/>
    <property type="evidence" value="ECO:0007669"/>
    <property type="project" value="UniProtKB-EC"/>
</dbReference>
<dbReference type="GO" id="GO:0046872">
    <property type="term" value="F:metal ion binding"/>
    <property type="evidence" value="ECO:0007669"/>
    <property type="project" value="UniProtKB-KW"/>
</dbReference>
<dbReference type="GO" id="GO:0045337">
    <property type="term" value="P:farnesyl diphosphate biosynthetic process"/>
    <property type="evidence" value="ECO:0007669"/>
    <property type="project" value="TreeGrafter"/>
</dbReference>
<dbReference type="CDD" id="cd00685">
    <property type="entry name" value="Trans_IPPS_HT"/>
    <property type="match status" value="1"/>
</dbReference>
<dbReference type="FunFam" id="1.10.600.10:FF:000008">
    <property type="entry name" value="Farnesyl pyrophosphate synthase"/>
    <property type="match status" value="1"/>
</dbReference>
<dbReference type="Gene3D" id="1.10.600.10">
    <property type="entry name" value="Farnesyl Diphosphate Synthase"/>
    <property type="match status" value="1"/>
</dbReference>
<dbReference type="InterPro" id="IPR039702">
    <property type="entry name" value="FPS1-like"/>
</dbReference>
<dbReference type="InterPro" id="IPR008949">
    <property type="entry name" value="Isoprenoid_synthase_dom_sf"/>
</dbReference>
<dbReference type="InterPro" id="IPR000092">
    <property type="entry name" value="Polyprenyl_synt"/>
</dbReference>
<dbReference type="InterPro" id="IPR033749">
    <property type="entry name" value="Polyprenyl_synt_CS"/>
</dbReference>
<dbReference type="PANTHER" id="PTHR11525:SF0">
    <property type="entry name" value="FARNESYL PYROPHOSPHATE SYNTHASE"/>
    <property type="match status" value="1"/>
</dbReference>
<dbReference type="PANTHER" id="PTHR11525">
    <property type="entry name" value="FARNESYL-PYROPHOSPHATE SYNTHETASE"/>
    <property type="match status" value="1"/>
</dbReference>
<dbReference type="Pfam" id="PF00348">
    <property type="entry name" value="polyprenyl_synt"/>
    <property type="match status" value="1"/>
</dbReference>
<dbReference type="SFLD" id="SFLDS00005">
    <property type="entry name" value="Isoprenoid_Synthase_Type_I"/>
    <property type="match status" value="1"/>
</dbReference>
<dbReference type="SFLD" id="SFLDG01017">
    <property type="entry name" value="Polyprenyl_Transferase_Like"/>
    <property type="match status" value="1"/>
</dbReference>
<dbReference type="SUPFAM" id="SSF48576">
    <property type="entry name" value="Terpenoid synthases"/>
    <property type="match status" value="1"/>
</dbReference>
<dbReference type="PROSITE" id="PS00723">
    <property type="entry name" value="POLYPRENYL_SYNTHASE_1"/>
    <property type="match status" value="1"/>
</dbReference>
<organism>
    <name type="scientific">Artemisia spiciformis</name>
    <name type="common">Spiked big sagebrush</name>
    <name type="synonym">Artemisia tridentata spiciformis</name>
    <dbReference type="NCBI Taxonomy" id="235357"/>
    <lineage>
        <taxon>Eukaryota</taxon>
        <taxon>Viridiplantae</taxon>
        <taxon>Streptophyta</taxon>
        <taxon>Embryophyta</taxon>
        <taxon>Tracheophyta</taxon>
        <taxon>Spermatophyta</taxon>
        <taxon>Magnoliopsida</taxon>
        <taxon>eudicotyledons</taxon>
        <taxon>Gunneridae</taxon>
        <taxon>Pentapetalae</taxon>
        <taxon>asterids</taxon>
        <taxon>campanulids</taxon>
        <taxon>Asterales</taxon>
        <taxon>Asteraceae</taxon>
        <taxon>Asteroideae</taxon>
        <taxon>Anthemideae</taxon>
        <taxon>Artemisiinae</taxon>
        <taxon>Artemisia</taxon>
    </lineage>
</organism>
<evidence type="ECO:0000250" key="1"/>
<evidence type="ECO:0000250" key="2">
    <source>
        <dbReference type="UniProtKB" id="P14324"/>
    </source>
</evidence>
<evidence type="ECO:0000255" key="3"/>
<evidence type="ECO:0000269" key="4">
    <source>
    </source>
</evidence>
<evidence type="ECO:0000305" key="5"/>
<evidence type="ECO:0007829" key="6">
    <source>
        <dbReference type="PDB" id="4KK2"/>
    </source>
</evidence>